<proteinExistence type="inferred from homology"/>
<gene>
    <name type="ORF">GM20779</name>
</gene>
<sequence length="335" mass="37613">MADNLEPLEPSLQNLVEQDSLKWIFVGGKGGVGKTTCSSSLAVQLSKVRESVLIISTDPAHNISDAFDQKFTKVPTKVNGFDNLFAMEIDPNAGLNELPEEYFDGENEALRQGRHARDDQRPCPGIDEAMSYAEVMKLVKGMNFSVVVFDTAPTGHTLRLIAFPQVVEKGLGKLLRLKMKVAPLLSQFVSMLGMADVNADTLSQKLDDMLRVITQVNEQFKNPDQTTFVCVCIAEFFSLYETERLVQELTKCGIDVHNIIVNQLLFLQKSHDSCSMCASRFKIQEKYLDQIADLYEDFHVTKLPLLEKEVRGPESIRSFSENLMKPFDPKAEPKE</sequence>
<feature type="chain" id="PRO_0000388155" description="ATPase ASNA1 homolog">
    <location>
        <begin position="1"/>
        <end position="335"/>
    </location>
</feature>
<feature type="active site" evidence="1">
    <location>
        <position position="58"/>
    </location>
</feature>
<feature type="binding site" evidence="1">
    <location>
        <begin position="29"/>
        <end position="36"/>
    </location>
    <ligand>
        <name>ATP</name>
        <dbReference type="ChEBI" id="CHEBI:30616"/>
    </ligand>
</feature>
<feature type="binding site" evidence="1">
    <location>
        <position position="235"/>
    </location>
    <ligand>
        <name>ATP</name>
        <dbReference type="ChEBI" id="CHEBI:30616"/>
    </ligand>
</feature>
<feature type="binding site" evidence="1">
    <location>
        <position position="262"/>
    </location>
    <ligand>
        <name>ATP</name>
        <dbReference type="ChEBI" id="CHEBI:30616"/>
    </ligand>
</feature>
<feature type="binding site" evidence="1">
    <location>
        <position position="274"/>
    </location>
    <ligand>
        <name>Zn(2+)</name>
        <dbReference type="ChEBI" id="CHEBI:29105"/>
        <note>ligand shared between dimeric partners</note>
    </ligand>
</feature>
<feature type="binding site" evidence="1">
    <location>
        <position position="277"/>
    </location>
    <ligand>
        <name>Zn(2+)</name>
        <dbReference type="ChEBI" id="CHEBI:29105"/>
        <note>ligand shared between dimeric partners</note>
    </ligand>
</feature>
<keyword id="KW-0067">ATP-binding</keyword>
<keyword id="KW-0963">Cytoplasm</keyword>
<keyword id="KW-0256">Endoplasmic reticulum</keyword>
<keyword id="KW-0378">Hydrolase</keyword>
<keyword id="KW-0479">Metal-binding</keyword>
<keyword id="KW-0547">Nucleotide-binding</keyword>
<keyword id="KW-1185">Reference proteome</keyword>
<keyword id="KW-0813">Transport</keyword>
<keyword id="KW-0862">Zinc</keyword>
<dbReference type="EC" id="3.6.-.-" evidence="1"/>
<dbReference type="EMBL" id="CH480816">
    <property type="protein sequence ID" value="EDW46778.1"/>
    <property type="molecule type" value="Genomic_DNA"/>
</dbReference>
<dbReference type="RefSeq" id="XP_002032765.1">
    <property type="nucleotide sequence ID" value="XM_002032729.1"/>
</dbReference>
<dbReference type="SMR" id="B4HR35"/>
<dbReference type="STRING" id="7238.B4HR35"/>
<dbReference type="EnsemblMetazoa" id="FBtr0203764">
    <property type="protein sequence ID" value="FBpp0202256"/>
    <property type="gene ID" value="FBgn0175660"/>
</dbReference>
<dbReference type="HOGENOM" id="CLU_040761_0_0_1"/>
<dbReference type="OMA" id="MDAPYEF"/>
<dbReference type="PhylomeDB" id="B4HR35"/>
<dbReference type="Proteomes" id="UP000001292">
    <property type="component" value="Unassembled WGS sequence"/>
</dbReference>
<dbReference type="GO" id="GO:0043529">
    <property type="term" value="C:GET complex"/>
    <property type="evidence" value="ECO:0007669"/>
    <property type="project" value="TreeGrafter"/>
</dbReference>
<dbReference type="GO" id="GO:0005524">
    <property type="term" value="F:ATP binding"/>
    <property type="evidence" value="ECO:0007669"/>
    <property type="project" value="UniProtKB-UniRule"/>
</dbReference>
<dbReference type="GO" id="GO:0016887">
    <property type="term" value="F:ATP hydrolysis activity"/>
    <property type="evidence" value="ECO:0007669"/>
    <property type="project" value="InterPro"/>
</dbReference>
<dbReference type="GO" id="GO:0046872">
    <property type="term" value="F:metal ion binding"/>
    <property type="evidence" value="ECO:0007669"/>
    <property type="project" value="UniProtKB-KW"/>
</dbReference>
<dbReference type="GO" id="GO:0071816">
    <property type="term" value="P:tail-anchored membrane protein insertion into ER membrane"/>
    <property type="evidence" value="ECO:0007669"/>
    <property type="project" value="TreeGrafter"/>
</dbReference>
<dbReference type="CDD" id="cd02035">
    <property type="entry name" value="ArsA"/>
    <property type="match status" value="1"/>
</dbReference>
<dbReference type="FunFam" id="3.40.50.300:FF:000235">
    <property type="entry name" value="ATPase ASNA1"/>
    <property type="match status" value="1"/>
</dbReference>
<dbReference type="Gene3D" id="3.40.50.300">
    <property type="entry name" value="P-loop containing nucleotide triphosphate hydrolases"/>
    <property type="match status" value="1"/>
</dbReference>
<dbReference type="HAMAP" id="MF_03112">
    <property type="entry name" value="Asna1_Get3"/>
    <property type="match status" value="1"/>
</dbReference>
<dbReference type="InterPro" id="IPR025723">
    <property type="entry name" value="Anion-transp_ATPase-like_dom"/>
</dbReference>
<dbReference type="InterPro" id="IPR016300">
    <property type="entry name" value="ATPase_ArsA/GET3"/>
</dbReference>
<dbReference type="InterPro" id="IPR027542">
    <property type="entry name" value="ATPase_ArsA/GET3_euk"/>
</dbReference>
<dbReference type="InterPro" id="IPR027417">
    <property type="entry name" value="P-loop_NTPase"/>
</dbReference>
<dbReference type="NCBIfam" id="TIGR00345">
    <property type="entry name" value="GET3_arsA_TRC40"/>
    <property type="match status" value="1"/>
</dbReference>
<dbReference type="PANTHER" id="PTHR10803">
    <property type="entry name" value="ARSENICAL PUMP-DRIVING ATPASE ARSENITE-TRANSLOCATING ATPASE"/>
    <property type="match status" value="1"/>
</dbReference>
<dbReference type="PANTHER" id="PTHR10803:SF3">
    <property type="entry name" value="ATPASE GET3"/>
    <property type="match status" value="1"/>
</dbReference>
<dbReference type="Pfam" id="PF02374">
    <property type="entry name" value="ArsA_ATPase"/>
    <property type="match status" value="1"/>
</dbReference>
<dbReference type="SUPFAM" id="SSF52540">
    <property type="entry name" value="P-loop containing nucleoside triphosphate hydrolases"/>
    <property type="match status" value="1"/>
</dbReference>
<comment type="function">
    <text evidence="1">ATPase required for the post-translational delivery of tail-anchored (TA) proteins to the endoplasmic reticulum. Recognizes and selectively binds the transmembrane domain of TA proteins in the cytosol. This complex then targets to the endoplasmic reticulum by membrane-bound receptors, where the tail-anchored protein is released for insertion. This process is regulated by ATP binding and hydrolysis. ATP binding drives the homodimer towards the closed dimer state, facilitating recognition of newly synthesized TA membrane proteins. ATP hydrolysis is required for insertion. Subsequently, the homodimer reverts towards the open dimer state, lowering its affinity for the membrane-bound receptor, and returning it to the cytosol to initiate a new round of targeting.</text>
</comment>
<comment type="subunit">
    <text evidence="1">Homodimer.</text>
</comment>
<comment type="subcellular location">
    <subcellularLocation>
        <location evidence="1">Cytoplasm</location>
    </subcellularLocation>
    <subcellularLocation>
        <location evidence="1">Endoplasmic reticulum</location>
    </subcellularLocation>
</comment>
<comment type="similarity">
    <text evidence="1">Belongs to the arsA ATPase family.</text>
</comment>
<accession>B4HR35</accession>
<name>ASNA_DROSE</name>
<protein>
    <recommendedName>
        <fullName evidence="1">ATPase ASNA1 homolog</fullName>
        <ecNumber evidence="1">3.6.-.-</ecNumber>
    </recommendedName>
    <alternativeName>
        <fullName evidence="1">Arsenical pump-driving ATPase homolog</fullName>
    </alternativeName>
    <alternativeName>
        <fullName evidence="1">Arsenite-stimulated ATPase</fullName>
    </alternativeName>
</protein>
<evidence type="ECO:0000255" key="1">
    <source>
        <dbReference type="HAMAP-Rule" id="MF_03112"/>
    </source>
</evidence>
<reference key="1">
    <citation type="journal article" date="2007" name="Nature">
        <title>Evolution of genes and genomes on the Drosophila phylogeny.</title>
        <authorList>
            <consortium name="Drosophila 12 genomes consortium"/>
        </authorList>
    </citation>
    <scope>NUCLEOTIDE SEQUENCE [LARGE SCALE GENOMIC DNA]</scope>
    <source>
        <strain>Rob3c / Tucson 14021-0248.25</strain>
    </source>
</reference>
<organism>
    <name type="scientific">Drosophila sechellia</name>
    <name type="common">Fruit fly</name>
    <dbReference type="NCBI Taxonomy" id="7238"/>
    <lineage>
        <taxon>Eukaryota</taxon>
        <taxon>Metazoa</taxon>
        <taxon>Ecdysozoa</taxon>
        <taxon>Arthropoda</taxon>
        <taxon>Hexapoda</taxon>
        <taxon>Insecta</taxon>
        <taxon>Pterygota</taxon>
        <taxon>Neoptera</taxon>
        <taxon>Endopterygota</taxon>
        <taxon>Diptera</taxon>
        <taxon>Brachycera</taxon>
        <taxon>Muscomorpha</taxon>
        <taxon>Ephydroidea</taxon>
        <taxon>Drosophilidae</taxon>
        <taxon>Drosophila</taxon>
        <taxon>Sophophora</taxon>
    </lineage>
</organism>